<feature type="chain" id="PRO_0000204078" description="Protein C-ets-2">
    <location>
        <begin position="1"/>
        <end position="468"/>
    </location>
</feature>
<feature type="domain" description="PNT" evidence="4">
    <location>
        <begin position="85"/>
        <end position="170"/>
    </location>
</feature>
<feature type="DNA-binding region" description="ETS" evidence="3">
    <location>
        <begin position="362"/>
        <end position="442"/>
    </location>
</feature>
<feature type="region of interest" description="Disordered" evidence="5">
    <location>
        <begin position="262"/>
        <end position="290"/>
    </location>
</feature>
<feature type="modified residue" description="Phosphoserine" evidence="2">
    <location>
        <position position="220"/>
    </location>
</feature>
<feature type="modified residue" description="Phosphoserine" evidence="2">
    <location>
        <position position="225"/>
    </location>
</feature>
<feature type="modified residue" description="Phosphoserine" evidence="2">
    <location>
        <position position="294"/>
    </location>
</feature>
<feature type="modified residue" description="Phosphoserine" evidence="7">
    <location>
        <position position="297"/>
    </location>
</feature>
<feature type="modified residue" description="Phosphoserine" evidence="7">
    <location>
        <position position="300"/>
    </location>
</feature>
<comment type="function">
    <text evidence="1">Transcription factor activating transcription. Binds specifically the GGA DNA motif in gene promoters and stimulates transcription of those genes (By similarity).</text>
</comment>
<comment type="subcellular location">
    <subcellularLocation>
        <location>Nucleus</location>
    </subcellularLocation>
</comment>
<comment type="PTM">
    <text evidence="1">Phosphorylation by CDK10 at Ser-220 and Ser-225 creates a phosphodegron that targets ETS2 for proteasomal degradation.</text>
</comment>
<comment type="similarity">
    <text evidence="6">Belongs to the ETS family.</text>
</comment>
<protein>
    <recommendedName>
        <fullName>Protein C-ets-2</fullName>
    </recommendedName>
</protein>
<accession>P15037</accession>
<gene>
    <name type="primary">Ets2</name>
</gene>
<sequence>MNDFGIKNMDQVAPVANSFRGTLKRQPAFDTFDGSLFAVLPSLSEDQTLQEVPTGLDSVSHDSASCELPLLTPCSKAVMSQALKATFSGFQKEQRRLGIPKNPWLWSEQQVCQWLLWATNEFSLVNVNLHQFGMNGQMLCNLGKERFLELAPDFVGDILWEHLEQMIKENQEKTEDQYEENSHLNAVPHWINSNTLGFSMEQAPYGMQAPNYPKDNLLDSMCPPSATPAALGSELQMLPKSRLNTVNVNYCSISQDFPSSNVNLLNNNSGKPKDHDSPENGGDSFESSDSLLRSWNSQSSLLDVQRVPSFESFEEDCSQSLCLSKLTMSFKDYIQERSDPVEQGKPVIPAAVLAGFTGSGPIQLWQFLLELLSDKSCQSFISWTGDGWEFKLADPDEVARRWGKRKNKPKMNYEKLSRGLRYYYDKNIIHKTSGKRYVYRFVCDLQNLLGFTPEELHAILGVQPDTED</sequence>
<keyword id="KW-0238">DNA-binding</keyword>
<keyword id="KW-0539">Nucleus</keyword>
<keyword id="KW-0597">Phosphoprotein</keyword>
<keyword id="KW-0656">Proto-oncogene</keyword>
<keyword id="KW-1185">Reference proteome</keyword>
<keyword id="KW-0804">Transcription</keyword>
<keyword id="KW-0805">Transcription regulation</keyword>
<proteinExistence type="evidence at protein level"/>
<evidence type="ECO:0000250" key="1"/>
<evidence type="ECO:0000250" key="2">
    <source>
        <dbReference type="UniProtKB" id="P15036"/>
    </source>
</evidence>
<evidence type="ECO:0000255" key="3">
    <source>
        <dbReference type="PROSITE-ProRule" id="PRU00237"/>
    </source>
</evidence>
<evidence type="ECO:0000255" key="4">
    <source>
        <dbReference type="PROSITE-ProRule" id="PRU00762"/>
    </source>
</evidence>
<evidence type="ECO:0000256" key="5">
    <source>
        <dbReference type="SAM" id="MobiDB-lite"/>
    </source>
</evidence>
<evidence type="ECO:0000305" key="6"/>
<evidence type="ECO:0007744" key="7">
    <source>
    </source>
</evidence>
<reference key="1">
    <citation type="journal article" date="1988" name="Proc. Natl. Acad. Sci. U.S.A.">
        <title>Mammalian ets-1 and ets-2 genes encode highly conserved proteins.</title>
        <authorList>
            <person name="Watson D.K."/>
            <person name="McWilliams M.J."/>
            <person name="Lapis P."/>
            <person name="Lautenberger J.A."/>
            <person name="Schweinfest C.W."/>
            <person name="Papas T.S."/>
        </authorList>
    </citation>
    <scope>NUCLEOTIDE SEQUENCE [MRNA]</scope>
</reference>
<reference key="2">
    <citation type="journal article" date="2004" name="Genome Res.">
        <title>The status, quality, and expansion of the NIH full-length cDNA project: the Mammalian Gene Collection (MGC).</title>
        <authorList>
            <consortium name="The MGC Project Team"/>
        </authorList>
    </citation>
    <scope>NUCLEOTIDE SEQUENCE [LARGE SCALE MRNA]</scope>
    <source>
        <strain>C57BL/6J</strain>
        <tissue>Mammary gland</tissue>
    </source>
</reference>
<reference key="3">
    <citation type="journal article" date="2010" name="Cell">
        <title>A tissue-specific atlas of mouse protein phosphorylation and expression.</title>
        <authorList>
            <person name="Huttlin E.L."/>
            <person name="Jedrychowski M.P."/>
            <person name="Elias J.E."/>
            <person name="Goswami T."/>
            <person name="Rad R."/>
            <person name="Beausoleil S.A."/>
            <person name="Villen J."/>
            <person name="Haas W."/>
            <person name="Sowa M.E."/>
            <person name="Gygi S.P."/>
        </authorList>
    </citation>
    <scope>PHOSPHORYLATION [LARGE SCALE ANALYSIS] AT SER-297 AND SER-300</scope>
    <scope>IDENTIFICATION BY MASS SPECTROMETRY [LARGE SCALE ANALYSIS]</scope>
    <source>
        <tissue>Heart</tissue>
        <tissue>Kidney</tissue>
        <tissue>Lung</tissue>
        <tissue>Spleen</tissue>
    </source>
</reference>
<organism>
    <name type="scientific">Mus musculus</name>
    <name type="common">Mouse</name>
    <dbReference type="NCBI Taxonomy" id="10090"/>
    <lineage>
        <taxon>Eukaryota</taxon>
        <taxon>Metazoa</taxon>
        <taxon>Chordata</taxon>
        <taxon>Craniata</taxon>
        <taxon>Vertebrata</taxon>
        <taxon>Euteleostomi</taxon>
        <taxon>Mammalia</taxon>
        <taxon>Eutheria</taxon>
        <taxon>Euarchontoglires</taxon>
        <taxon>Glires</taxon>
        <taxon>Rodentia</taxon>
        <taxon>Myomorpha</taxon>
        <taxon>Muroidea</taxon>
        <taxon>Muridae</taxon>
        <taxon>Murinae</taxon>
        <taxon>Mus</taxon>
        <taxon>Mus</taxon>
    </lineage>
</organism>
<name>ETS2_MOUSE</name>
<dbReference type="EMBL" id="J04103">
    <property type="protein sequence ID" value="AAA37581.1"/>
    <property type="molecule type" value="mRNA"/>
</dbReference>
<dbReference type="EMBL" id="BC005504">
    <property type="protein sequence ID" value="AAH05504.1"/>
    <property type="molecule type" value="mRNA"/>
</dbReference>
<dbReference type="CCDS" id="CCDS37412.1"/>
<dbReference type="PIR" id="C32066">
    <property type="entry name" value="TVMSE2"/>
</dbReference>
<dbReference type="RefSeq" id="NP_035939.3">
    <property type="nucleotide sequence ID" value="NM_011809.3"/>
</dbReference>
<dbReference type="SMR" id="P15037"/>
<dbReference type="BioGRID" id="204766">
    <property type="interactions" value="8"/>
</dbReference>
<dbReference type="CORUM" id="P15037"/>
<dbReference type="DIP" id="DIP-41847N"/>
<dbReference type="FunCoup" id="P15037">
    <property type="interactions" value="2392"/>
</dbReference>
<dbReference type="IntAct" id="P15037">
    <property type="interactions" value="2"/>
</dbReference>
<dbReference type="STRING" id="10090.ENSMUSP00000023612"/>
<dbReference type="GlyGen" id="P15037">
    <property type="glycosylation" value="1 site"/>
</dbReference>
<dbReference type="iPTMnet" id="P15037"/>
<dbReference type="PhosphoSitePlus" id="P15037"/>
<dbReference type="PaxDb" id="10090-ENSMUSP00000023612"/>
<dbReference type="ProteomicsDB" id="271504"/>
<dbReference type="Pumba" id="P15037"/>
<dbReference type="Antibodypedia" id="8721">
    <property type="antibodies" value="415 antibodies from 33 providers"/>
</dbReference>
<dbReference type="DNASU" id="23872"/>
<dbReference type="Ensembl" id="ENSMUST00000023612.17">
    <property type="protein sequence ID" value="ENSMUSP00000023612.9"/>
    <property type="gene ID" value="ENSMUSG00000022895.17"/>
</dbReference>
<dbReference type="GeneID" id="23872"/>
<dbReference type="KEGG" id="mmu:23872"/>
<dbReference type="UCSC" id="uc008ace.2">
    <property type="organism name" value="mouse"/>
</dbReference>
<dbReference type="AGR" id="MGI:95456"/>
<dbReference type="CTD" id="2114"/>
<dbReference type="MGI" id="MGI:95456">
    <property type="gene designation" value="Ets2"/>
</dbReference>
<dbReference type="VEuPathDB" id="HostDB:ENSMUSG00000022895"/>
<dbReference type="eggNOG" id="KOG3806">
    <property type="taxonomic scope" value="Eukaryota"/>
</dbReference>
<dbReference type="GeneTree" id="ENSGT00940000160202"/>
<dbReference type="HOGENOM" id="CLU_031197_1_1_1"/>
<dbReference type="InParanoid" id="P15037"/>
<dbReference type="OMA" id="DFGIRNM"/>
<dbReference type="OrthoDB" id="10067219at2759"/>
<dbReference type="PhylomeDB" id="P15037"/>
<dbReference type="TreeFam" id="TF316214"/>
<dbReference type="Reactome" id="R-MMU-2559585">
    <property type="pathway name" value="Oncogene Induced Senescence"/>
</dbReference>
<dbReference type="BioGRID-ORCS" id="23872">
    <property type="hits" value="4 hits in 80 CRISPR screens"/>
</dbReference>
<dbReference type="ChiTaRS" id="Ets2">
    <property type="organism name" value="mouse"/>
</dbReference>
<dbReference type="PRO" id="PR:P15037"/>
<dbReference type="Proteomes" id="UP000000589">
    <property type="component" value="Chromosome 16"/>
</dbReference>
<dbReference type="RNAct" id="P15037">
    <property type="molecule type" value="protein"/>
</dbReference>
<dbReference type="Bgee" id="ENSMUSG00000022895">
    <property type="expression patterns" value="Expressed in placenta labyrinth and 305 other cell types or tissues"/>
</dbReference>
<dbReference type="ExpressionAtlas" id="P15037">
    <property type="expression patterns" value="baseline and differential"/>
</dbReference>
<dbReference type="GO" id="GO:0005829">
    <property type="term" value="C:cytosol"/>
    <property type="evidence" value="ECO:0007669"/>
    <property type="project" value="Ensembl"/>
</dbReference>
<dbReference type="GO" id="GO:0005654">
    <property type="term" value="C:nucleoplasm"/>
    <property type="evidence" value="ECO:0007669"/>
    <property type="project" value="Ensembl"/>
</dbReference>
<dbReference type="GO" id="GO:0005886">
    <property type="term" value="C:plasma membrane"/>
    <property type="evidence" value="ECO:0007669"/>
    <property type="project" value="Ensembl"/>
</dbReference>
<dbReference type="GO" id="GO:0001227">
    <property type="term" value="F:DNA-binding transcription repressor activity, RNA polymerase II-specific"/>
    <property type="evidence" value="ECO:0007669"/>
    <property type="project" value="Ensembl"/>
</dbReference>
<dbReference type="GO" id="GO:0035259">
    <property type="term" value="F:nuclear glucocorticoid receptor binding"/>
    <property type="evidence" value="ECO:0007669"/>
    <property type="project" value="Ensembl"/>
</dbReference>
<dbReference type="GO" id="GO:0019904">
    <property type="term" value="F:protein domain specific binding"/>
    <property type="evidence" value="ECO:0007669"/>
    <property type="project" value="Ensembl"/>
</dbReference>
<dbReference type="GO" id="GO:0000978">
    <property type="term" value="F:RNA polymerase II cis-regulatory region sequence-specific DNA binding"/>
    <property type="evidence" value="ECO:0007669"/>
    <property type="project" value="Ensembl"/>
</dbReference>
<dbReference type="GO" id="GO:0000977">
    <property type="term" value="F:RNA polymerase II transcription regulatory region sequence-specific DNA binding"/>
    <property type="evidence" value="ECO:0000314"/>
    <property type="project" value="MGI"/>
</dbReference>
<dbReference type="GO" id="GO:0043565">
    <property type="term" value="F:sequence-specific DNA binding"/>
    <property type="evidence" value="ECO:0000314"/>
    <property type="project" value="MGI"/>
</dbReference>
<dbReference type="GO" id="GO:0001712">
    <property type="term" value="P:ectodermal cell fate commitment"/>
    <property type="evidence" value="ECO:0000316"/>
    <property type="project" value="MGI"/>
</dbReference>
<dbReference type="GO" id="GO:0007498">
    <property type="term" value="P:mesoderm development"/>
    <property type="evidence" value="ECO:0000315"/>
    <property type="project" value="MGI"/>
</dbReference>
<dbReference type="GO" id="GO:0045944">
    <property type="term" value="P:positive regulation of transcription by RNA polymerase II"/>
    <property type="evidence" value="ECO:0007669"/>
    <property type="project" value="Ensembl"/>
</dbReference>
<dbReference type="GO" id="GO:0090009">
    <property type="term" value="P:primitive streak formation"/>
    <property type="evidence" value="ECO:0000315"/>
    <property type="project" value="MGI"/>
</dbReference>
<dbReference type="CDD" id="cd08543">
    <property type="entry name" value="SAM_PNT-ETS-2"/>
    <property type="match status" value="1"/>
</dbReference>
<dbReference type="FunFam" id="1.10.10.10:FF:000097">
    <property type="entry name" value="Protein c-ets-1 isoform 1"/>
    <property type="match status" value="1"/>
</dbReference>
<dbReference type="FunFam" id="1.10.150.50:FF:000014">
    <property type="entry name" value="Protein c-ets-1 isoform 1"/>
    <property type="match status" value="1"/>
</dbReference>
<dbReference type="Gene3D" id="1.10.150.50">
    <property type="entry name" value="Transcription Factor, Ets-1"/>
    <property type="match status" value="1"/>
</dbReference>
<dbReference type="Gene3D" id="1.10.10.10">
    <property type="entry name" value="Winged helix-like DNA-binding domain superfamily/Winged helix DNA-binding domain"/>
    <property type="match status" value="1"/>
</dbReference>
<dbReference type="InterPro" id="IPR045688">
    <property type="entry name" value="Ets1_N_flank"/>
</dbReference>
<dbReference type="InterPro" id="IPR000418">
    <property type="entry name" value="Ets_dom"/>
</dbReference>
<dbReference type="InterPro" id="IPR046328">
    <property type="entry name" value="ETS_fam"/>
</dbReference>
<dbReference type="InterPro" id="IPR003118">
    <property type="entry name" value="Pointed_dom"/>
</dbReference>
<dbReference type="InterPro" id="IPR013761">
    <property type="entry name" value="SAM/pointed_sf"/>
</dbReference>
<dbReference type="InterPro" id="IPR016311">
    <property type="entry name" value="Transform_prot_C-ets"/>
</dbReference>
<dbReference type="InterPro" id="IPR027276">
    <property type="entry name" value="Transform_prot_C-ets-2"/>
</dbReference>
<dbReference type="InterPro" id="IPR036388">
    <property type="entry name" value="WH-like_DNA-bd_sf"/>
</dbReference>
<dbReference type="InterPro" id="IPR036390">
    <property type="entry name" value="WH_DNA-bd_sf"/>
</dbReference>
<dbReference type="PANTHER" id="PTHR11849">
    <property type="entry name" value="ETS"/>
    <property type="match status" value="1"/>
</dbReference>
<dbReference type="PANTHER" id="PTHR11849:SF188">
    <property type="entry name" value="PROTEIN C-ETS-2"/>
    <property type="match status" value="1"/>
</dbReference>
<dbReference type="Pfam" id="PF00178">
    <property type="entry name" value="Ets"/>
    <property type="match status" value="1"/>
</dbReference>
<dbReference type="Pfam" id="PF19525">
    <property type="entry name" value="Ets1_N_flank"/>
    <property type="match status" value="1"/>
</dbReference>
<dbReference type="Pfam" id="PF02198">
    <property type="entry name" value="SAM_PNT"/>
    <property type="match status" value="1"/>
</dbReference>
<dbReference type="PIRSF" id="PIRSF501032">
    <property type="entry name" value="C-ets-2"/>
    <property type="match status" value="1"/>
</dbReference>
<dbReference type="PIRSF" id="PIRSF001698">
    <property type="entry name" value="Transforming_factor_C-ets"/>
    <property type="match status" value="1"/>
</dbReference>
<dbReference type="PRINTS" id="PR00454">
    <property type="entry name" value="ETSDOMAIN"/>
</dbReference>
<dbReference type="SMART" id="SM00413">
    <property type="entry name" value="ETS"/>
    <property type="match status" value="1"/>
</dbReference>
<dbReference type="SMART" id="SM00251">
    <property type="entry name" value="SAM_PNT"/>
    <property type="match status" value="1"/>
</dbReference>
<dbReference type="SUPFAM" id="SSF47769">
    <property type="entry name" value="SAM/Pointed domain"/>
    <property type="match status" value="1"/>
</dbReference>
<dbReference type="SUPFAM" id="SSF46785">
    <property type="entry name" value="Winged helix' DNA-binding domain"/>
    <property type="match status" value="1"/>
</dbReference>
<dbReference type="PROSITE" id="PS00345">
    <property type="entry name" value="ETS_DOMAIN_1"/>
    <property type="match status" value="1"/>
</dbReference>
<dbReference type="PROSITE" id="PS00346">
    <property type="entry name" value="ETS_DOMAIN_2"/>
    <property type="match status" value="1"/>
</dbReference>
<dbReference type="PROSITE" id="PS50061">
    <property type="entry name" value="ETS_DOMAIN_3"/>
    <property type="match status" value="1"/>
</dbReference>
<dbReference type="PROSITE" id="PS51433">
    <property type="entry name" value="PNT"/>
    <property type="match status" value="1"/>
</dbReference>